<reference key="1">
    <citation type="submission" date="2006-10" db="EMBL/GenBank/DDBJ databases">
        <title>Complete sequence of chromosome of Pelobacter propionicus DSM 2379.</title>
        <authorList>
            <consortium name="US DOE Joint Genome Institute"/>
            <person name="Copeland A."/>
            <person name="Lucas S."/>
            <person name="Lapidus A."/>
            <person name="Barry K."/>
            <person name="Detter J.C."/>
            <person name="Glavina del Rio T."/>
            <person name="Hammon N."/>
            <person name="Israni S."/>
            <person name="Dalin E."/>
            <person name="Tice H."/>
            <person name="Pitluck S."/>
            <person name="Saunders E."/>
            <person name="Brettin T."/>
            <person name="Bruce D."/>
            <person name="Han C."/>
            <person name="Tapia R."/>
            <person name="Schmutz J."/>
            <person name="Larimer F."/>
            <person name="Land M."/>
            <person name="Hauser L."/>
            <person name="Kyrpides N."/>
            <person name="Kim E."/>
            <person name="Lovley D."/>
            <person name="Richardson P."/>
        </authorList>
    </citation>
    <scope>NUCLEOTIDE SEQUENCE [LARGE SCALE GENOMIC DNA]</scope>
    <source>
        <strain>DSM 2379 / NBRC 103807 / OttBd1</strain>
    </source>
</reference>
<organism>
    <name type="scientific">Pelobacter propionicus (strain DSM 2379 / NBRC 103807 / OttBd1)</name>
    <dbReference type="NCBI Taxonomy" id="338966"/>
    <lineage>
        <taxon>Bacteria</taxon>
        <taxon>Pseudomonadati</taxon>
        <taxon>Thermodesulfobacteriota</taxon>
        <taxon>Desulfuromonadia</taxon>
        <taxon>Desulfuromonadales</taxon>
        <taxon>Desulfuromonadaceae</taxon>
        <taxon>Pelobacter</taxon>
    </lineage>
</organism>
<feature type="chain" id="PRO_0000298704" description="Pyrimidine/purine nucleoside phosphorylase">
    <location>
        <begin position="1"/>
        <end position="104"/>
    </location>
</feature>
<comment type="function">
    <text evidence="1">Catalyzes the phosphorolysis of diverse nucleosides, yielding D-ribose 1-phosphate and the respective free bases. Can use uridine, adenosine, guanosine, cytidine, thymidine, inosine and xanthosine as substrates. Also catalyzes the reverse reactions.</text>
</comment>
<comment type="catalytic activity">
    <reaction evidence="1">
        <text>a purine D-ribonucleoside + phosphate = a purine nucleobase + alpha-D-ribose 1-phosphate</text>
        <dbReference type="Rhea" id="RHEA:19805"/>
        <dbReference type="ChEBI" id="CHEBI:26386"/>
        <dbReference type="ChEBI" id="CHEBI:43474"/>
        <dbReference type="ChEBI" id="CHEBI:57720"/>
        <dbReference type="ChEBI" id="CHEBI:142355"/>
        <dbReference type="EC" id="2.4.2.1"/>
    </reaction>
</comment>
<comment type="catalytic activity">
    <reaction evidence="1">
        <text>adenosine + phosphate = alpha-D-ribose 1-phosphate + adenine</text>
        <dbReference type="Rhea" id="RHEA:27642"/>
        <dbReference type="ChEBI" id="CHEBI:16335"/>
        <dbReference type="ChEBI" id="CHEBI:16708"/>
        <dbReference type="ChEBI" id="CHEBI:43474"/>
        <dbReference type="ChEBI" id="CHEBI:57720"/>
        <dbReference type="EC" id="2.4.2.1"/>
    </reaction>
</comment>
<comment type="catalytic activity">
    <reaction evidence="1">
        <text>cytidine + phosphate = cytosine + alpha-D-ribose 1-phosphate</text>
        <dbReference type="Rhea" id="RHEA:52540"/>
        <dbReference type="ChEBI" id="CHEBI:16040"/>
        <dbReference type="ChEBI" id="CHEBI:17562"/>
        <dbReference type="ChEBI" id="CHEBI:43474"/>
        <dbReference type="ChEBI" id="CHEBI:57720"/>
        <dbReference type="EC" id="2.4.2.2"/>
    </reaction>
</comment>
<comment type="catalytic activity">
    <reaction evidence="1">
        <text>guanosine + phosphate = alpha-D-ribose 1-phosphate + guanine</text>
        <dbReference type="Rhea" id="RHEA:13233"/>
        <dbReference type="ChEBI" id="CHEBI:16235"/>
        <dbReference type="ChEBI" id="CHEBI:16750"/>
        <dbReference type="ChEBI" id="CHEBI:43474"/>
        <dbReference type="ChEBI" id="CHEBI:57720"/>
        <dbReference type="EC" id="2.4.2.1"/>
    </reaction>
</comment>
<comment type="catalytic activity">
    <reaction evidence="1">
        <text>inosine + phosphate = alpha-D-ribose 1-phosphate + hypoxanthine</text>
        <dbReference type="Rhea" id="RHEA:27646"/>
        <dbReference type="ChEBI" id="CHEBI:17368"/>
        <dbReference type="ChEBI" id="CHEBI:17596"/>
        <dbReference type="ChEBI" id="CHEBI:43474"/>
        <dbReference type="ChEBI" id="CHEBI:57720"/>
        <dbReference type="EC" id="2.4.2.1"/>
    </reaction>
</comment>
<comment type="catalytic activity">
    <reaction evidence="1">
        <text>thymidine + phosphate = 2-deoxy-alpha-D-ribose 1-phosphate + thymine</text>
        <dbReference type="Rhea" id="RHEA:16037"/>
        <dbReference type="ChEBI" id="CHEBI:17748"/>
        <dbReference type="ChEBI" id="CHEBI:17821"/>
        <dbReference type="ChEBI" id="CHEBI:43474"/>
        <dbReference type="ChEBI" id="CHEBI:57259"/>
        <dbReference type="EC" id="2.4.2.2"/>
    </reaction>
</comment>
<comment type="catalytic activity">
    <reaction evidence="1">
        <text>uridine + phosphate = alpha-D-ribose 1-phosphate + uracil</text>
        <dbReference type="Rhea" id="RHEA:24388"/>
        <dbReference type="ChEBI" id="CHEBI:16704"/>
        <dbReference type="ChEBI" id="CHEBI:17568"/>
        <dbReference type="ChEBI" id="CHEBI:43474"/>
        <dbReference type="ChEBI" id="CHEBI:57720"/>
        <dbReference type="EC" id="2.4.2.2"/>
    </reaction>
</comment>
<comment type="catalytic activity">
    <reaction evidence="1">
        <text>xanthosine + phosphate = alpha-D-ribose 1-phosphate + xanthine</text>
        <dbReference type="Rhea" id="RHEA:27638"/>
        <dbReference type="ChEBI" id="CHEBI:17712"/>
        <dbReference type="ChEBI" id="CHEBI:18107"/>
        <dbReference type="ChEBI" id="CHEBI:43474"/>
        <dbReference type="ChEBI" id="CHEBI:57720"/>
        <dbReference type="EC" id="2.4.2.1"/>
    </reaction>
</comment>
<comment type="similarity">
    <text evidence="1">Belongs to the nucleoside phosphorylase PpnP family.</text>
</comment>
<evidence type="ECO:0000255" key="1">
    <source>
        <dbReference type="HAMAP-Rule" id="MF_01537"/>
    </source>
</evidence>
<proteinExistence type="inferred from homology"/>
<dbReference type="EC" id="2.4.2.1" evidence="1"/>
<dbReference type="EC" id="2.4.2.2" evidence="1"/>
<dbReference type="EMBL" id="CP000482">
    <property type="protein sequence ID" value="ABL00965.1"/>
    <property type="molecule type" value="Genomic_DNA"/>
</dbReference>
<dbReference type="RefSeq" id="WP_011737181.1">
    <property type="nucleotide sequence ID" value="NC_008609.1"/>
</dbReference>
<dbReference type="SMR" id="A1AUE4"/>
<dbReference type="STRING" id="338966.Ppro_3372"/>
<dbReference type="KEGG" id="ppd:Ppro_3372"/>
<dbReference type="eggNOG" id="COG3123">
    <property type="taxonomic scope" value="Bacteria"/>
</dbReference>
<dbReference type="HOGENOM" id="CLU_157874_1_0_7"/>
<dbReference type="OrthoDB" id="9793848at2"/>
<dbReference type="Proteomes" id="UP000006732">
    <property type="component" value="Chromosome"/>
</dbReference>
<dbReference type="GO" id="GO:0005829">
    <property type="term" value="C:cytosol"/>
    <property type="evidence" value="ECO:0007669"/>
    <property type="project" value="TreeGrafter"/>
</dbReference>
<dbReference type="GO" id="GO:0047975">
    <property type="term" value="F:guanosine phosphorylase activity"/>
    <property type="evidence" value="ECO:0007669"/>
    <property type="project" value="UniProtKB-EC"/>
</dbReference>
<dbReference type="GO" id="GO:0004731">
    <property type="term" value="F:purine-nucleoside phosphorylase activity"/>
    <property type="evidence" value="ECO:0007669"/>
    <property type="project" value="UniProtKB-UniRule"/>
</dbReference>
<dbReference type="GO" id="GO:0009032">
    <property type="term" value="F:thymidine phosphorylase activity"/>
    <property type="evidence" value="ECO:0007669"/>
    <property type="project" value="UniProtKB-EC"/>
</dbReference>
<dbReference type="GO" id="GO:0004850">
    <property type="term" value="F:uridine phosphorylase activity"/>
    <property type="evidence" value="ECO:0007669"/>
    <property type="project" value="UniProtKB-EC"/>
</dbReference>
<dbReference type="CDD" id="cd20296">
    <property type="entry name" value="cupin_PpnP-like"/>
    <property type="match status" value="1"/>
</dbReference>
<dbReference type="Gene3D" id="2.60.120.10">
    <property type="entry name" value="Jelly Rolls"/>
    <property type="match status" value="1"/>
</dbReference>
<dbReference type="HAMAP" id="MF_01537">
    <property type="entry name" value="Nucleos_phosphorylase_PpnP"/>
    <property type="match status" value="1"/>
</dbReference>
<dbReference type="InterPro" id="IPR009664">
    <property type="entry name" value="Ppnp"/>
</dbReference>
<dbReference type="InterPro" id="IPR014710">
    <property type="entry name" value="RmlC-like_jellyroll"/>
</dbReference>
<dbReference type="InterPro" id="IPR011051">
    <property type="entry name" value="RmlC_Cupin_sf"/>
</dbReference>
<dbReference type="PANTHER" id="PTHR36540">
    <property type="entry name" value="PYRIMIDINE/PURINE NUCLEOSIDE PHOSPHORYLASE"/>
    <property type="match status" value="1"/>
</dbReference>
<dbReference type="PANTHER" id="PTHR36540:SF1">
    <property type="entry name" value="PYRIMIDINE_PURINE NUCLEOSIDE PHOSPHORYLASE"/>
    <property type="match status" value="1"/>
</dbReference>
<dbReference type="Pfam" id="PF06865">
    <property type="entry name" value="Ppnp"/>
    <property type="match status" value="1"/>
</dbReference>
<dbReference type="SUPFAM" id="SSF51182">
    <property type="entry name" value="RmlC-like cupins"/>
    <property type="match status" value="1"/>
</dbReference>
<gene>
    <name evidence="1" type="primary">ppnP</name>
    <name type="ordered locus">Ppro_3372</name>
</gene>
<name>PPNP_PELPD</name>
<sequence length="104" mass="11448">MSEFSNVTVIKKANIYFEGKVASHTVLFPDGTKKTLGIMQAGDYEFSTANAEVMEILSGTLEWQMKGECCWKTIGAGESFQIPADSVFLMKVPAVADYCCSYIQ</sequence>
<protein>
    <recommendedName>
        <fullName evidence="1">Pyrimidine/purine nucleoside phosphorylase</fullName>
        <ecNumber evidence="1">2.4.2.1</ecNumber>
        <ecNumber evidence="1">2.4.2.2</ecNumber>
    </recommendedName>
    <alternativeName>
        <fullName evidence="1">Adenosine phosphorylase</fullName>
    </alternativeName>
    <alternativeName>
        <fullName evidence="1">Cytidine phosphorylase</fullName>
    </alternativeName>
    <alternativeName>
        <fullName evidence="1">Guanosine phosphorylase</fullName>
    </alternativeName>
    <alternativeName>
        <fullName evidence="1">Inosine phosphorylase</fullName>
    </alternativeName>
    <alternativeName>
        <fullName evidence="1">Thymidine phosphorylase</fullName>
    </alternativeName>
    <alternativeName>
        <fullName evidence="1">Uridine phosphorylase</fullName>
    </alternativeName>
    <alternativeName>
        <fullName evidence="1">Xanthosine phosphorylase</fullName>
    </alternativeName>
</protein>
<keyword id="KW-0328">Glycosyltransferase</keyword>
<keyword id="KW-1185">Reference proteome</keyword>
<keyword id="KW-0808">Transferase</keyword>
<accession>A1AUE4</accession>